<feature type="chain" id="PRO_1000024292" description="Phosphoglycolate phosphatase">
    <location>
        <begin position="1"/>
        <end position="234"/>
    </location>
</feature>
<feature type="active site" description="Nucleophile" evidence="1">
    <location>
        <position position="9"/>
    </location>
</feature>
<feature type="binding site" evidence="1">
    <location>
        <position position="9"/>
    </location>
    <ligand>
        <name>Mg(2+)</name>
        <dbReference type="ChEBI" id="CHEBI:18420"/>
    </ligand>
</feature>
<feature type="binding site" evidence="1">
    <location>
        <position position="11"/>
    </location>
    <ligand>
        <name>Mg(2+)</name>
        <dbReference type="ChEBI" id="CHEBI:18420"/>
    </ligand>
</feature>
<feature type="binding site" evidence="1">
    <location>
        <position position="162"/>
    </location>
    <ligand>
        <name>substrate</name>
    </ligand>
</feature>
<feature type="binding site" evidence="1">
    <location>
        <position position="185"/>
    </location>
    <ligand>
        <name>Mg(2+)</name>
        <dbReference type="ChEBI" id="CHEBI:18420"/>
    </ligand>
</feature>
<feature type="binding site" evidence="1">
    <location>
        <position position="189"/>
    </location>
    <ligand>
        <name>Mg(2+)</name>
        <dbReference type="ChEBI" id="CHEBI:18420"/>
    </ligand>
</feature>
<keyword id="KW-0119">Carbohydrate metabolism</keyword>
<keyword id="KW-0378">Hydrolase</keyword>
<keyword id="KW-0460">Magnesium</keyword>
<keyword id="KW-0479">Metal-binding</keyword>
<protein>
    <recommendedName>
        <fullName evidence="1">Phosphoglycolate phosphatase</fullName>
        <shortName evidence="1">PGP</shortName>
        <shortName evidence="1">PGPase</shortName>
        <ecNumber evidence="1">3.1.3.18</ecNumber>
    </recommendedName>
</protein>
<reference key="1">
    <citation type="journal article" date="2007" name="Proc. Natl. Acad. Sci. U.S.A.">
        <title>Genomic and metabolic adaptations of Methanobrevibacter smithii to the human gut.</title>
        <authorList>
            <person name="Samuel B.S."/>
            <person name="Hansen E.E."/>
            <person name="Manchester J.K."/>
            <person name="Coutinho P.M."/>
            <person name="Henrissat B."/>
            <person name="Fulton R."/>
            <person name="Latreille P."/>
            <person name="Kim K."/>
            <person name="Wilson R.K."/>
            <person name="Gordon J.I."/>
        </authorList>
    </citation>
    <scope>NUCLEOTIDE SEQUENCE [LARGE SCALE GENOMIC DNA]</scope>
    <source>
        <strain>ATCC 35061 / DSM 861 / OCM 144 / PS</strain>
    </source>
</reference>
<sequence>MNIDAIAVDIDGTITDNKRRLCYSAMEAIRKAEDAGVPTIIVTGNIVTYAYATLVLLGASGGVVGENGGVIFKENYNNNQIKTVVDRTYVNAADKHLKERLGSKFDKNISNDNMYRLTESVFYKTITKKELEEGLKGFEYLDKIELYDSGFALHVTDKRVNKGSSLKYLCNENGIDMENVMAMGDSENDEAFLKEAGMKVAVGNAEDFLKKNSDYVCKNNYGDGVKEAIEKFVL</sequence>
<dbReference type="EC" id="3.1.3.18" evidence="1"/>
<dbReference type="EMBL" id="CP000678">
    <property type="protein sequence ID" value="ABQ87151.1"/>
    <property type="molecule type" value="Genomic_DNA"/>
</dbReference>
<dbReference type="RefSeq" id="WP_011954195.1">
    <property type="nucleotide sequence ID" value="NZ_CP117965.1"/>
</dbReference>
<dbReference type="SMR" id="A5ULS3"/>
<dbReference type="STRING" id="420247.Msm_0946"/>
<dbReference type="EnsemblBacteria" id="ABQ87151">
    <property type="protein sequence ID" value="ABQ87151"/>
    <property type="gene ID" value="Msm_0946"/>
</dbReference>
<dbReference type="KEGG" id="msi:Msm_0946"/>
<dbReference type="PATRIC" id="fig|420247.28.peg.942"/>
<dbReference type="eggNOG" id="arCOG01213">
    <property type="taxonomic scope" value="Archaea"/>
</dbReference>
<dbReference type="HOGENOM" id="CLU_044146_2_0_2"/>
<dbReference type="BioCyc" id="MSMI420247:GHWZ-971-MONOMER"/>
<dbReference type="Proteomes" id="UP000001992">
    <property type="component" value="Chromosome"/>
</dbReference>
<dbReference type="GO" id="GO:0005829">
    <property type="term" value="C:cytosol"/>
    <property type="evidence" value="ECO:0007669"/>
    <property type="project" value="TreeGrafter"/>
</dbReference>
<dbReference type="GO" id="GO:0000287">
    <property type="term" value="F:magnesium ion binding"/>
    <property type="evidence" value="ECO:0007669"/>
    <property type="project" value="InterPro"/>
</dbReference>
<dbReference type="GO" id="GO:0008967">
    <property type="term" value="F:phosphoglycolate phosphatase activity"/>
    <property type="evidence" value="ECO:0007669"/>
    <property type="project" value="UniProtKB-UniRule"/>
</dbReference>
<dbReference type="CDD" id="cd07514">
    <property type="entry name" value="HAD_Pase"/>
    <property type="match status" value="1"/>
</dbReference>
<dbReference type="Gene3D" id="3.90.1070.10">
    <property type="match status" value="1"/>
</dbReference>
<dbReference type="Gene3D" id="3.40.50.1000">
    <property type="entry name" value="HAD superfamily/HAD-like"/>
    <property type="match status" value="1"/>
</dbReference>
<dbReference type="HAMAP" id="MF_01419">
    <property type="entry name" value="GPH_hydrolase_arch"/>
    <property type="match status" value="1"/>
</dbReference>
<dbReference type="InterPro" id="IPR036412">
    <property type="entry name" value="HAD-like_sf"/>
</dbReference>
<dbReference type="InterPro" id="IPR006379">
    <property type="entry name" value="HAD-SF_hydro_IIB"/>
</dbReference>
<dbReference type="InterPro" id="IPR023214">
    <property type="entry name" value="HAD_sf"/>
</dbReference>
<dbReference type="InterPro" id="IPR006382">
    <property type="entry name" value="PGPase"/>
</dbReference>
<dbReference type="NCBIfam" id="TIGR01484">
    <property type="entry name" value="HAD-SF-IIB"/>
    <property type="match status" value="1"/>
</dbReference>
<dbReference type="NCBIfam" id="TIGR01487">
    <property type="entry name" value="Pglycolate_arch"/>
    <property type="match status" value="1"/>
</dbReference>
<dbReference type="NCBIfam" id="NF002245">
    <property type="entry name" value="PRK01158.1"/>
    <property type="match status" value="1"/>
</dbReference>
<dbReference type="NCBIfam" id="TIGR01482">
    <property type="entry name" value="SPP-subfamily"/>
    <property type="match status" value="1"/>
</dbReference>
<dbReference type="PANTHER" id="PTHR10000:SF8">
    <property type="entry name" value="HAD SUPERFAMILY HYDROLASE-LIKE, TYPE 3"/>
    <property type="match status" value="1"/>
</dbReference>
<dbReference type="PANTHER" id="PTHR10000">
    <property type="entry name" value="PHOSPHOSERINE PHOSPHATASE"/>
    <property type="match status" value="1"/>
</dbReference>
<dbReference type="Pfam" id="PF08282">
    <property type="entry name" value="Hydrolase_3"/>
    <property type="match status" value="1"/>
</dbReference>
<dbReference type="SFLD" id="SFLDG01144">
    <property type="entry name" value="C2.B.4:_PGP_Like"/>
    <property type="match status" value="1"/>
</dbReference>
<dbReference type="SFLD" id="SFLDF00446">
    <property type="entry name" value="phosphoglycolate_phosphatase_3"/>
    <property type="match status" value="1"/>
</dbReference>
<dbReference type="SUPFAM" id="SSF56784">
    <property type="entry name" value="HAD-like"/>
    <property type="match status" value="1"/>
</dbReference>
<organism>
    <name type="scientific">Methanobrevibacter smithii (strain ATCC 35061 / DSM 861 / OCM 144 / PS)</name>
    <dbReference type="NCBI Taxonomy" id="420247"/>
    <lineage>
        <taxon>Archaea</taxon>
        <taxon>Methanobacteriati</taxon>
        <taxon>Methanobacteriota</taxon>
        <taxon>Methanomada group</taxon>
        <taxon>Methanobacteria</taxon>
        <taxon>Methanobacteriales</taxon>
        <taxon>Methanobacteriaceae</taxon>
        <taxon>Methanobrevibacter</taxon>
    </lineage>
</organism>
<name>PGP_METS3</name>
<comment type="function">
    <text evidence="1">Catalyzes the dephosphorylation of 2-phosphoglycolate.</text>
</comment>
<comment type="catalytic activity">
    <reaction evidence="1">
        <text>2-phosphoglycolate + H2O = glycolate + phosphate</text>
        <dbReference type="Rhea" id="RHEA:14369"/>
        <dbReference type="ChEBI" id="CHEBI:15377"/>
        <dbReference type="ChEBI" id="CHEBI:29805"/>
        <dbReference type="ChEBI" id="CHEBI:43474"/>
        <dbReference type="ChEBI" id="CHEBI:58033"/>
        <dbReference type="EC" id="3.1.3.18"/>
    </reaction>
</comment>
<comment type="cofactor">
    <cofactor evidence="1">
        <name>Mg(2+)</name>
        <dbReference type="ChEBI" id="CHEBI:18420"/>
    </cofactor>
</comment>
<comment type="similarity">
    <text evidence="1">Belongs to the archaeal SPP-like hydrolase family.</text>
</comment>
<gene>
    <name type="ordered locus">Msm_0946</name>
</gene>
<proteinExistence type="inferred from homology"/>
<accession>A5ULS3</accession>
<evidence type="ECO:0000255" key="1">
    <source>
        <dbReference type="HAMAP-Rule" id="MF_01419"/>
    </source>
</evidence>